<comment type="catalytic activity">
    <reaction evidence="1">
        <text>tRNA(Gly) + glycine + ATP = glycyl-tRNA(Gly) + AMP + diphosphate</text>
        <dbReference type="Rhea" id="RHEA:16013"/>
        <dbReference type="Rhea" id="RHEA-COMP:9664"/>
        <dbReference type="Rhea" id="RHEA-COMP:9683"/>
        <dbReference type="ChEBI" id="CHEBI:30616"/>
        <dbReference type="ChEBI" id="CHEBI:33019"/>
        <dbReference type="ChEBI" id="CHEBI:57305"/>
        <dbReference type="ChEBI" id="CHEBI:78442"/>
        <dbReference type="ChEBI" id="CHEBI:78522"/>
        <dbReference type="ChEBI" id="CHEBI:456215"/>
        <dbReference type="EC" id="6.1.1.14"/>
    </reaction>
</comment>
<comment type="subunit">
    <text evidence="1">Tetramer of two alpha and two beta subunits.</text>
</comment>
<comment type="subcellular location">
    <subcellularLocation>
        <location evidence="1">Cytoplasm</location>
    </subcellularLocation>
</comment>
<comment type="similarity">
    <text evidence="1">Belongs to the class-II aminoacyl-tRNA synthetase family.</text>
</comment>
<evidence type="ECO:0000255" key="1">
    <source>
        <dbReference type="HAMAP-Rule" id="MF_00254"/>
    </source>
</evidence>
<name>SYGA_PROM5</name>
<keyword id="KW-0030">Aminoacyl-tRNA synthetase</keyword>
<keyword id="KW-0067">ATP-binding</keyword>
<keyword id="KW-0963">Cytoplasm</keyword>
<keyword id="KW-0436">Ligase</keyword>
<keyword id="KW-0547">Nucleotide-binding</keyword>
<keyword id="KW-0648">Protein biosynthesis</keyword>
<proteinExistence type="inferred from homology"/>
<reference key="1">
    <citation type="journal article" date="2007" name="PLoS Genet.">
        <title>Patterns and implications of gene gain and loss in the evolution of Prochlorococcus.</title>
        <authorList>
            <person name="Kettler G.C."/>
            <person name="Martiny A.C."/>
            <person name="Huang K."/>
            <person name="Zucker J."/>
            <person name="Coleman M.L."/>
            <person name="Rodrigue S."/>
            <person name="Chen F."/>
            <person name="Lapidus A."/>
            <person name="Ferriera S."/>
            <person name="Johnson J."/>
            <person name="Steglich C."/>
            <person name="Church G.M."/>
            <person name="Richardson P."/>
            <person name="Chisholm S.W."/>
        </authorList>
    </citation>
    <scope>NUCLEOTIDE SEQUENCE [LARGE SCALE GENOMIC DNA]</scope>
    <source>
        <strain>MIT 9515</strain>
    </source>
</reference>
<organism>
    <name type="scientific">Prochlorococcus marinus (strain MIT 9515)</name>
    <dbReference type="NCBI Taxonomy" id="167542"/>
    <lineage>
        <taxon>Bacteria</taxon>
        <taxon>Bacillati</taxon>
        <taxon>Cyanobacteriota</taxon>
        <taxon>Cyanophyceae</taxon>
        <taxon>Synechococcales</taxon>
        <taxon>Prochlorococcaceae</taxon>
        <taxon>Prochlorococcus</taxon>
    </lineage>
</organism>
<sequence>MFFQDIIQNLNKFWSEEGCLIMQPYDTEKGAGTMNPHTFLRAIGPEPWSVAYAEPCRRPTDGRFGDNPNRAQHYFQYQVIIKPSPDRIQEKYLSSLEFLGINPKEHDIRFVEDNWESPTLGAWGVGWEVWLDGMEVTQFTYFQQCGGVDCNPIPIEITYGLERIATFLQDKESIWDLDWNKDFNYSDIWLQFEKNQCEFNFRASNPENMRKLFSIYQEEAVSLLDKKLTFPALDFVLKCSHCFNLLDARGVISVTDRAQYIEKIRKLAREVASSWIIERESLKFPLLKK</sequence>
<dbReference type="EC" id="6.1.1.14" evidence="1"/>
<dbReference type="EMBL" id="CP000552">
    <property type="protein sequence ID" value="ABM72542.1"/>
    <property type="molecule type" value="Genomic_DNA"/>
</dbReference>
<dbReference type="RefSeq" id="WP_011820639.1">
    <property type="nucleotide sequence ID" value="NC_008817.1"/>
</dbReference>
<dbReference type="SMR" id="A2BXN1"/>
<dbReference type="STRING" id="167542.P9515_13351"/>
<dbReference type="GeneID" id="60201684"/>
<dbReference type="KEGG" id="pmc:P9515_13351"/>
<dbReference type="eggNOG" id="COG0752">
    <property type="taxonomic scope" value="Bacteria"/>
</dbReference>
<dbReference type="HOGENOM" id="CLU_057066_1_0_3"/>
<dbReference type="OrthoDB" id="9802183at2"/>
<dbReference type="Proteomes" id="UP000001589">
    <property type="component" value="Chromosome"/>
</dbReference>
<dbReference type="GO" id="GO:0005829">
    <property type="term" value="C:cytosol"/>
    <property type="evidence" value="ECO:0007669"/>
    <property type="project" value="TreeGrafter"/>
</dbReference>
<dbReference type="GO" id="GO:0005524">
    <property type="term" value="F:ATP binding"/>
    <property type="evidence" value="ECO:0007669"/>
    <property type="project" value="UniProtKB-UniRule"/>
</dbReference>
<dbReference type="GO" id="GO:0004820">
    <property type="term" value="F:glycine-tRNA ligase activity"/>
    <property type="evidence" value="ECO:0007669"/>
    <property type="project" value="UniProtKB-UniRule"/>
</dbReference>
<dbReference type="GO" id="GO:0006426">
    <property type="term" value="P:glycyl-tRNA aminoacylation"/>
    <property type="evidence" value="ECO:0007669"/>
    <property type="project" value="UniProtKB-UniRule"/>
</dbReference>
<dbReference type="CDD" id="cd00733">
    <property type="entry name" value="GlyRS_alpha_core"/>
    <property type="match status" value="1"/>
</dbReference>
<dbReference type="FunFam" id="3.30.930.10:FF:000006">
    <property type="entry name" value="Glycine--tRNA ligase alpha subunit"/>
    <property type="match status" value="1"/>
</dbReference>
<dbReference type="Gene3D" id="3.30.930.10">
    <property type="entry name" value="Bira Bifunctional Protein, Domain 2"/>
    <property type="match status" value="1"/>
</dbReference>
<dbReference type="Gene3D" id="1.20.58.180">
    <property type="entry name" value="Class II aaRS and biotin synthetases, domain 2"/>
    <property type="match status" value="1"/>
</dbReference>
<dbReference type="HAMAP" id="MF_00254">
    <property type="entry name" value="Gly_tRNA_synth_alpha"/>
    <property type="match status" value="1"/>
</dbReference>
<dbReference type="InterPro" id="IPR045864">
    <property type="entry name" value="aa-tRNA-synth_II/BPL/LPL"/>
</dbReference>
<dbReference type="InterPro" id="IPR006194">
    <property type="entry name" value="Gly-tRNA-synth_heterodimer"/>
</dbReference>
<dbReference type="InterPro" id="IPR002310">
    <property type="entry name" value="Gly-tRNA_ligase_asu"/>
</dbReference>
<dbReference type="NCBIfam" id="TIGR00388">
    <property type="entry name" value="glyQ"/>
    <property type="match status" value="1"/>
</dbReference>
<dbReference type="NCBIfam" id="NF006827">
    <property type="entry name" value="PRK09348.1"/>
    <property type="match status" value="1"/>
</dbReference>
<dbReference type="PANTHER" id="PTHR30075:SF2">
    <property type="entry name" value="GLYCINE--TRNA LIGASE, CHLOROPLASTIC_MITOCHONDRIAL 2"/>
    <property type="match status" value="1"/>
</dbReference>
<dbReference type="PANTHER" id="PTHR30075">
    <property type="entry name" value="GLYCYL-TRNA SYNTHETASE"/>
    <property type="match status" value="1"/>
</dbReference>
<dbReference type="Pfam" id="PF02091">
    <property type="entry name" value="tRNA-synt_2e"/>
    <property type="match status" value="1"/>
</dbReference>
<dbReference type="PRINTS" id="PR01044">
    <property type="entry name" value="TRNASYNTHGA"/>
</dbReference>
<dbReference type="SUPFAM" id="SSF55681">
    <property type="entry name" value="Class II aaRS and biotin synthetases"/>
    <property type="match status" value="1"/>
</dbReference>
<dbReference type="PROSITE" id="PS50861">
    <property type="entry name" value="AA_TRNA_LIGASE_II_GLYAB"/>
    <property type="match status" value="1"/>
</dbReference>
<feature type="chain" id="PRO_1000047461" description="Glycine--tRNA ligase alpha subunit">
    <location>
        <begin position="1"/>
        <end position="289"/>
    </location>
</feature>
<accession>A2BXN1</accession>
<gene>
    <name evidence="1" type="primary">glyQ</name>
    <name type="ordered locus">P9515_13351</name>
</gene>
<protein>
    <recommendedName>
        <fullName evidence="1">Glycine--tRNA ligase alpha subunit</fullName>
        <ecNumber evidence="1">6.1.1.14</ecNumber>
    </recommendedName>
    <alternativeName>
        <fullName evidence="1">Glycyl-tRNA synthetase alpha subunit</fullName>
        <shortName evidence="1">GlyRS</shortName>
    </alternativeName>
</protein>